<organism>
    <name type="scientific">Rotavirus A (strain RVA/Human/United States/D/1974/G1P1A[8])</name>
    <name type="common">RV-A</name>
    <dbReference type="NCBI Taxonomy" id="578831"/>
    <lineage>
        <taxon>Viruses</taxon>
        <taxon>Riboviria</taxon>
        <taxon>Orthornavirae</taxon>
        <taxon>Duplornaviricota</taxon>
        <taxon>Resentoviricetes</taxon>
        <taxon>Reovirales</taxon>
        <taxon>Sedoreoviridae</taxon>
        <taxon>Rotavirus</taxon>
        <taxon>Rotavirus A</taxon>
    </lineage>
</organism>
<keyword id="KW-1072">Activation of host autophagy by virus</keyword>
<keyword id="KW-0106">Calcium</keyword>
<keyword id="KW-0260">Enterotoxin</keyword>
<keyword id="KW-0325">Glycoprotein</keyword>
<keyword id="KW-1038">Host endoplasmic reticulum</keyword>
<keyword id="KW-1043">Host membrane</keyword>
<keyword id="KW-0945">Host-virus interaction</keyword>
<keyword id="KW-0407">Ion channel</keyword>
<keyword id="KW-0406">Ion transport</keyword>
<keyword id="KW-0472">Membrane</keyword>
<keyword id="KW-0479">Metal-binding</keyword>
<keyword id="KW-1185">Reference proteome</keyword>
<keyword id="KW-0964">Secreted</keyword>
<keyword id="KW-0735">Signal-anchor</keyword>
<keyword id="KW-0800">Toxin</keyword>
<keyword id="KW-0812">Transmembrane</keyword>
<keyword id="KW-1133">Transmembrane helix</keyword>
<keyword id="KW-0813">Transport</keyword>
<keyword id="KW-1182">Viral ion channel</keyword>
<keyword id="KW-0843">Virulence</keyword>
<protein>
    <recommendedName>
        <fullName evidence="1">Non-structural glycoprotein 4</fullName>
        <shortName evidence="1">NSP4</shortName>
    </recommendedName>
    <alternativeName>
        <fullName evidence="1">NCVP5</fullName>
    </alternativeName>
    <alternativeName>
        <fullName evidence="1">NS28</fullName>
    </alternativeName>
</protein>
<sequence length="175" mass="20247">MDKLADLNYTLSVITLMNDTLHSIIQDPGMAYFPYIASVLTVLFTLHKASIPTMKIALKTSKCSYKVIKYCIVTIINTLLKLAGYKEQVTTKDEIEQQMDRIVKEMRRQLEMIDKLTTREIEQVELLKRIHDNLITRPVDVIDMSKEFNQKNIKTLDEWESGKNPYEPSEVTASM</sequence>
<evidence type="ECO:0000255" key="1">
    <source>
        <dbReference type="HAMAP-Rule" id="MF_04091"/>
    </source>
</evidence>
<comment type="function">
    <text evidence="1">Plays an essential role in the virus replication cycle by acting as a viroporin. Creates a pore in the host endoplasmic reticulum and as a consequence releases Ca(2+) in the cytoplasm of infected cell. In turn, high levels of cytoplasmic calcium trigger membrane trafficking and transport of viral ER-associated proteins to viroplasms, sites of viral genome replication and immature particle assembly.</text>
</comment>
<comment type="function">
    <text evidence="1">The secreted form acts as an enterotoxin that causes phospholipase C-dependent elevation of the intracellular calcium concentration in host intestinal mucosa cells. Increased concentration of intracellular calcium disrupts the cytoskeleton and the tight junctions, raising the paracellular permeability. Potentiates chloride ion secretion through a calcium ion-dependent signaling pathway, inducing age-dependent diarrhea. To perform this enterotoxigenic role in vivo, NSP4 is released from infected enterocytes in a soluble form capable of diffusing within the intestinal lumen and interacting with host plasma membrane receptors on neighboring epithelial cells such as integrins ITGA1/ITGB1 and ITGA2/ITGB1.</text>
</comment>
<comment type="subunit">
    <text evidence="1">Homotetramer. Interacts with the immature particle in the viroplasm. Interacts with host CAV1, early and late in infection. Interacts with host integrin ITGA1/ITGB1 heterodimer. Interacts with host integrin ITGA2/ITGB1 heterodimer. Interaction with microtubules blocks trafficking to the Golgi apparatus.</text>
</comment>
<comment type="subcellular location">
    <subcellularLocation>
        <location evidence="1">Host rough endoplasmic reticulum membrane</location>
        <topology evidence="1">Single-pass type III membrane protein</topology>
    </subcellularLocation>
    <subcellularLocation>
        <location evidence="1">Host membrane</location>
        <location evidence="1">Host caveola</location>
        <topology evidence="1">Single-pass type III membrane protein</topology>
    </subcellularLocation>
    <subcellularLocation>
        <location evidence="1">Secreted</location>
    </subcellularLocation>
    <text evidence="1">NSP4 also localizes in vesicular structures which contain autophagosomal markers and associate with viroplasms in virus-infected cells. Additionally, a soluble form of glycosylated NSP4 is secreted despite retention of its transmembrane domain.</text>
</comment>
<comment type="domain">
    <text evidence="1">Binds 1 calcium ion per tetramer.</text>
</comment>
<comment type="PTM">
    <text evidence="1">The N-glycosyl content is primarily Man(9)GlcNAc, with a small amount of Man(8)GlcNAc.</text>
</comment>
<comment type="similarity">
    <text evidence="1">Belongs to the rotavirus NSP4 family.</text>
</comment>
<proteinExistence type="inferred from homology"/>
<name>NSP4_ROTAD</name>
<accession>Q9YJN7</accession>
<accession>B3SRS4</accession>
<organismHost>
    <name type="scientific">Homo sapiens</name>
    <name type="common">Human</name>
    <dbReference type="NCBI Taxonomy" id="9606"/>
</organismHost>
<feature type="chain" id="PRO_0000369487" description="Non-structural glycoprotein 4">
    <location>
        <begin position="1"/>
        <end position="175"/>
    </location>
</feature>
<feature type="topological domain" description="Lumenal" evidence="1">
    <location>
        <begin position="1"/>
        <end position="28"/>
    </location>
</feature>
<feature type="transmembrane region" description="Helical; Signal-anchor for type III membrane protein" evidence="1">
    <location>
        <begin position="29"/>
        <end position="51"/>
    </location>
</feature>
<feature type="topological domain" description="Cytoplasmic" evidence="1">
    <location>
        <begin position="52"/>
        <end position="175"/>
    </location>
</feature>
<feature type="binding site" evidence="1">
    <location>
        <position position="120"/>
    </location>
    <ligand>
        <name>Ca(2+)</name>
        <dbReference type="ChEBI" id="CHEBI:29108"/>
    </ligand>
</feature>
<feature type="binding site" evidence="1">
    <location>
        <position position="123"/>
    </location>
    <ligand>
        <name>Ca(2+)</name>
        <dbReference type="ChEBI" id="CHEBI:29108"/>
    </ligand>
</feature>
<feature type="glycosylation site" description="N-linked (GlcNAc...) asparagine; by host" evidence="1">
    <location>
        <position position="8"/>
    </location>
</feature>
<feature type="glycosylation site" description="N-linked (GlcNAc...) asparagine; by host" evidence="1">
    <location>
        <position position="18"/>
    </location>
</feature>
<feature type="sequence conflict" description="In Ref. 3; ABV53249." ref="3">
    <original>T</original>
    <variation>A</variation>
    <location>
        <position position="45"/>
    </location>
</feature>
<dbReference type="EMBL" id="AB112915">
    <property type="protein sequence ID" value="BAC78396.1"/>
    <property type="molecule type" value="Genomic_RNA"/>
</dbReference>
<dbReference type="EMBL" id="AJ236765">
    <property type="protein sequence ID" value="CAB36946.1"/>
    <property type="molecule type" value="Genomic_RNA"/>
</dbReference>
<dbReference type="EMBL" id="AJ236770">
    <property type="protein sequence ID" value="CAB36951.1"/>
    <property type="molecule type" value="Genomic_RNA"/>
</dbReference>
<dbReference type="EMBL" id="AJ236771">
    <property type="protein sequence ID" value="CAB36952.1"/>
    <property type="molecule type" value="Genomic_RNA"/>
</dbReference>
<dbReference type="EMBL" id="EF672575">
    <property type="protein sequence ID" value="ABV53249.1"/>
    <property type="molecule type" value="Genomic_RNA"/>
</dbReference>
<dbReference type="SMR" id="Q9YJN7"/>
<dbReference type="Proteomes" id="UP000006368">
    <property type="component" value="Genome"/>
</dbReference>
<dbReference type="GO" id="GO:0005576">
    <property type="term" value="C:extracellular region"/>
    <property type="evidence" value="ECO:0007669"/>
    <property type="project" value="UniProtKB-SubCell"/>
</dbReference>
<dbReference type="GO" id="GO:0044155">
    <property type="term" value="C:host caveola"/>
    <property type="evidence" value="ECO:0007669"/>
    <property type="project" value="UniProtKB-SubCell"/>
</dbReference>
<dbReference type="GO" id="GO:0044169">
    <property type="term" value="C:host cell rough endoplasmic reticulum membrane"/>
    <property type="evidence" value="ECO:0007669"/>
    <property type="project" value="UniProtKB-SubCell"/>
</dbReference>
<dbReference type="GO" id="GO:0016020">
    <property type="term" value="C:membrane"/>
    <property type="evidence" value="ECO:0007669"/>
    <property type="project" value="UniProtKB-UniRule"/>
</dbReference>
<dbReference type="GO" id="GO:0015267">
    <property type="term" value="F:channel activity"/>
    <property type="evidence" value="ECO:0007669"/>
    <property type="project" value="UniProtKB-KW"/>
</dbReference>
<dbReference type="GO" id="GO:0046872">
    <property type="term" value="F:metal ion binding"/>
    <property type="evidence" value="ECO:0007669"/>
    <property type="project" value="UniProtKB-UniRule"/>
</dbReference>
<dbReference type="GO" id="GO:0090729">
    <property type="term" value="F:toxin activity"/>
    <property type="evidence" value="ECO:0007669"/>
    <property type="project" value="UniProtKB-UniRule"/>
</dbReference>
<dbReference type="GO" id="GO:0034220">
    <property type="term" value="P:monoatomic ion transmembrane transport"/>
    <property type="evidence" value="ECO:0007669"/>
    <property type="project" value="UniProtKB-KW"/>
</dbReference>
<dbReference type="GO" id="GO:0039520">
    <property type="term" value="P:symbiont-mediated activation of host autophagy"/>
    <property type="evidence" value="ECO:0007669"/>
    <property type="project" value="UniProtKB-KW"/>
</dbReference>
<dbReference type="GO" id="GO:0016032">
    <property type="term" value="P:viral process"/>
    <property type="evidence" value="ECO:0007669"/>
    <property type="project" value="UniProtKB-UniRule"/>
</dbReference>
<dbReference type="Gene3D" id="1.20.5.430">
    <property type="match status" value="1"/>
</dbReference>
<dbReference type="HAMAP" id="MF_04091">
    <property type="entry name" value="ROTA_NSP4"/>
    <property type="match status" value="1"/>
</dbReference>
<dbReference type="InterPro" id="IPR002107">
    <property type="entry name" value="Rotavirus_NSP4"/>
</dbReference>
<dbReference type="Pfam" id="PF01452">
    <property type="entry name" value="Rota_NSP4"/>
    <property type="match status" value="1"/>
</dbReference>
<dbReference type="SUPFAM" id="SSF58030">
    <property type="entry name" value="Rotavirus nonstructural proteins"/>
    <property type="match status" value="1"/>
</dbReference>
<reference key="1">
    <citation type="submission" date="2003-06" db="EMBL/GenBank/DDBJ databases">
        <title>NSP4 sequences in human, pocine, murine rotavirus strains.</title>
        <authorList>
            <person name="Honma S."/>
            <person name="Hoshino Y."/>
            <person name="Ishida S."/>
            <person name="Yuan L."/>
        </authorList>
    </citation>
    <scope>NUCLEOTIDE SEQUENCE [GENOMIC RNA]</scope>
</reference>
<reference key="2">
    <citation type="journal article" date="1999" name="Virus Genes">
        <title>Sequence analysis of the NSP4 gene from human rotavirus strains isolated in the United States.</title>
        <authorList>
            <person name="Kirkwood C.D."/>
            <person name="Gentsch J.R."/>
            <person name="Glass R.I."/>
        </authorList>
    </citation>
    <scope>NUCLEOTIDE SEQUENCE [GENOMIC RNA]</scope>
    <source>
        <strain>Isolate 1052</strain>
        <strain>Isolate 1151</strain>
        <strain>Isolate 1152</strain>
    </source>
</reference>
<reference key="3">
    <citation type="journal article" date="2008" name="J. Virol.">
        <title>Group A human rotavirus genomics: evidence that gene constellations are influenced by viral protein interactions.</title>
        <authorList>
            <person name="Heiman E.M."/>
            <person name="McDonald S.M."/>
            <person name="Barro M."/>
            <person name="Taraporewala Z.F."/>
            <person name="Bar-Magen T."/>
            <person name="Patton J.T."/>
        </authorList>
    </citation>
    <scope>NUCLEOTIDE SEQUENCE [GENOMIC RNA]</scope>
</reference>